<proteinExistence type="evidence at transcript level"/>
<gene>
    <name type="primary">Daw1</name>
    <name type="synonym">Wdr69</name>
</gene>
<comment type="function">
    <text evidence="2">Required for axonemal dynein assembly and ciliary motility in ciliated organs, including Kupffer's vesicle, during embryogenesis. Facilitates the onset of robust cilia motility during development.</text>
</comment>
<comment type="subunit">
    <text evidence="2">Interacts with IFT46.</text>
</comment>
<comment type="subcellular location">
    <subcellularLocation>
        <location evidence="1">Cytoplasm</location>
        <location evidence="1">Cytoskeleton</location>
        <location evidence="1">Flagellum basal body</location>
    </subcellularLocation>
    <subcellularLocation>
        <location evidence="1">Cytoplasm</location>
        <location evidence="1">Cytoskeleton</location>
        <location evidence="1">Flagellum axoneme</location>
    </subcellularLocation>
    <text evidence="1">Expression is concentrated at the flagellum basal body but is also detected along the length of the flagellum.</text>
</comment>
<comment type="similarity">
    <text evidence="3">Belongs to the WD repeat WDR69 family.</text>
</comment>
<accession>Q5BK30</accession>
<keyword id="KW-0966">Cell projection</keyword>
<keyword id="KW-0969">Cilium</keyword>
<keyword id="KW-0963">Cytoplasm</keyword>
<keyword id="KW-0206">Cytoskeleton</keyword>
<keyword id="KW-0282">Flagellum</keyword>
<keyword id="KW-1185">Reference proteome</keyword>
<keyword id="KW-0677">Repeat</keyword>
<keyword id="KW-0853">WD repeat</keyword>
<evidence type="ECO:0000250" key="1">
    <source>
        <dbReference type="UniProtKB" id="Q3Y8L7"/>
    </source>
</evidence>
<evidence type="ECO:0000250" key="2">
    <source>
        <dbReference type="UniProtKB" id="Q8N136"/>
    </source>
</evidence>
<evidence type="ECO:0000305" key="3"/>
<protein>
    <recommendedName>
        <fullName>Dynein assembly factor with WD repeat domains 1</fullName>
    </recommendedName>
    <alternativeName>
        <fullName>Outer row dynein assembly protein 16 homolog</fullName>
    </alternativeName>
    <alternativeName>
        <fullName>WD repeat-containing protein 69</fullName>
    </alternativeName>
</protein>
<sequence length="415" mass="45859">MKLKSLLLRYYPPGIMLEYEKGGELKTKSIDLLELSPSTDVNTLVGEIQKVEPLITASRTKQVRLLVQRLQEKLRQHCDHNFYLFKVLRAHILPLTNVALNKAGSCFITGSYDRTCKVWDTASGEELHTLEGHRNVVYAIAFNNPYGDKIATGSFDKTCKLWSAETGKCYHTFRGHTAEIVCLSFNPQSTVVATGSMDTTAKLWDIQSGEEVVTLTGHLAEIISLSFDTSGDRIITGSFDHTVVVWDASTGRKVHTLIGHCAEISSALFSWDCSLILTGSMDKTCMLWDATSGKCVATLTGHDDEILDSCFDYTGKLIATASADGTARVYNATTRKCITKLEGHEGEISKISFNPQGNRLLTGSSDKTARIWDVQTGQCLQVLEGHTDEIFSCAFNYKGNIVITGSKDNSCRIWR</sequence>
<feature type="chain" id="PRO_0000242656" description="Dynein assembly factor with WD repeat domains 1">
    <location>
        <begin position="1"/>
        <end position="415"/>
    </location>
</feature>
<feature type="repeat" description="WD 1">
    <location>
        <begin position="90"/>
        <end position="129"/>
    </location>
</feature>
<feature type="repeat" description="WD 2">
    <location>
        <begin position="132"/>
        <end position="174"/>
    </location>
</feature>
<feature type="repeat" description="WD 3">
    <location>
        <begin position="175"/>
        <end position="214"/>
    </location>
</feature>
<feature type="repeat" description="WD 4">
    <location>
        <begin position="217"/>
        <end position="256"/>
    </location>
</feature>
<feature type="repeat" description="WD 5">
    <location>
        <begin position="259"/>
        <end position="298"/>
    </location>
</feature>
<feature type="repeat" description="WD 6">
    <location>
        <begin position="301"/>
        <end position="340"/>
    </location>
</feature>
<feature type="repeat" description="WD 7">
    <location>
        <begin position="343"/>
        <end position="384"/>
    </location>
</feature>
<feature type="repeat" description="WD 8">
    <location>
        <begin position="386"/>
        <end position="415"/>
    </location>
</feature>
<organism>
    <name type="scientific">Rattus norvegicus</name>
    <name type="common">Rat</name>
    <dbReference type="NCBI Taxonomy" id="10116"/>
    <lineage>
        <taxon>Eukaryota</taxon>
        <taxon>Metazoa</taxon>
        <taxon>Chordata</taxon>
        <taxon>Craniata</taxon>
        <taxon>Vertebrata</taxon>
        <taxon>Euteleostomi</taxon>
        <taxon>Mammalia</taxon>
        <taxon>Eutheria</taxon>
        <taxon>Euarchontoglires</taxon>
        <taxon>Glires</taxon>
        <taxon>Rodentia</taxon>
        <taxon>Myomorpha</taxon>
        <taxon>Muroidea</taxon>
        <taxon>Muridae</taxon>
        <taxon>Murinae</taxon>
        <taxon>Rattus</taxon>
    </lineage>
</organism>
<reference key="1">
    <citation type="journal article" date="2004" name="Genome Res.">
        <title>The status, quality, and expansion of the NIH full-length cDNA project: the Mammalian Gene Collection (MGC).</title>
        <authorList>
            <consortium name="The MGC Project Team"/>
        </authorList>
    </citation>
    <scope>NUCLEOTIDE SEQUENCE [LARGE SCALE MRNA]</scope>
    <source>
        <tissue>Testis</tissue>
    </source>
</reference>
<dbReference type="EMBL" id="BC091226">
    <property type="protein sequence ID" value="AAH91226.1"/>
    <property type="molecule type" value="mRNA"/>
</dbReference>
<dbReference type="RefSeq" id="NP_001020196.1">
    <property type="nucleotide sequence ID" value="NM_001025025.1"/>
</dbReference>
<dbReference type="SMR" id="Q5BK30"/>
<dbReference type="BioGRID" id="264090">
    <property type="interactions" value="1"/>
</dbReference>
<dbReference type="STRING" id="10116.ENSRNOP00000059421"/>
<dbReference type="PhosphoSitePlus" id="Q5BK30"/>
<dbReference type="PaxDb" id="10116-ENSRNOP00000059421"/>
<dbReference type="GeneID" id="363267"/>
<dbReference type="KEGG" id="rno:363267"/>
<dbReference type="UCSC" id="RGD:1561436">
    <property type="organism name" value="rat"/>
</dbReference>
<dbReference type="AGR" id="RGD:1561436"/>
<dbReference type="CTD" id="164781"/>
<dbReference type="RGD" id="1561436">
    <property type="gene designation" value="Daw1"/>
</dbReference>
<dbReference type="VEuPathDB" id="HostDB:ENSRNOG00000016247"/>
<dbReference type="eggNOG" id="KOG0272">
    <property type="taxonomic scope" value="Eukaryota"/>
</dbReference>
<dbReference type="HOGENOM" id="CLU_000288_57_33_1"/>
<dbReference type="InParanoid" id="Q5BK30"/>
<dbReference type="OrthoDB" id="11321at9989"/>
<dbReference type="PhylomeDB" id="Q5BK30"/>
<dbReference type="TreeFam" id="TF323481"/>
<dbReference type="PRO" id="PR:Q5BK30"/>
<dbReference type="Proteomes" id="UP000002494">
    <property type="component" value="Chromosome 9"/>
</dbReference>
<dbReference type="Bgee" id="ENSRNOG00000016247">
    <property type="expression patterns" value="Expressed in testis and 6 other cell types or tissues"/>
</dbReference>
<dbReference type="ExpressionAtlas" id="Q5BK30">
    <property type="expression patterns" value="baseline"/>
</dbReference>
<dbReference type="GO" id="GO:0036064">
    <property type="term" value="C:ciliary basal body"/>
    <property type="evidence" value="ECO:0000250"/>
    <property type="project" value="UniProtKB"/>
</dbReference>
<dbReference type="GO" id="GO:0005929">
    <property type="term" value="C:cilium"/>
    <property type="evidence" value="ECO:0000250"/>
    <property type="project" value="UniProtKB"/>
</dbReference>
<dbReference type="GO" id="GO:0005737">
    <property type="term" value="C:cytoplasm"/>
    <property type="evidence" value="ECO:0007669"/>
    <property type="project" value="UniProtKB-KW"/>
</dbReference>
<dbReference type="GO" id="GO:0005576">
    <property type="term" value="C:extracellular region"/>
    <property type="evidence" value="ECO:0007669"/>
    <property type="project" value="GOC"/>
</dbReference>
<dbReference type="GO" id="GO:0031514">
    <property type="term" value="C:motile cilium"/>
    <property type="evidence" value="ECO:0007669"/>
    <property type="project" value="UniProtKB-KW"/>
</dbReference>
<dbReference type="GO" id="GO:0019005">
    <property type="term" value="C:SCF ubiquitin ligase complex"/>
    <property type="evidence" value="ECO:0000318"/>
    <property type="project" value="GO_Central"/>
</dbReference>
<dbReference type="GO" id="GO:1990756">
    <property type="term" value="F:ubiquitin-like ligase-substrate adaptor activity"/>
    <property type="evidence" value="ECO:0000318"/>
    <property type="project" value="GO_Central"/>
</dbReference>
<dbReference type="GO" id="GO:0090660">
    <property type="term" value="P:cerebrospinal fluid circulation"/>
    <property type="evidence" value="ECO:0000266"/>
    <property type="project" value="RGD"/>
</dbReference>
<dbReference type="GO" id="GO:0007368">
    <property type="term" value="P:determination of left/right symmetry"/>
    <property type="evidence" value="ECO:0000266"/>
    <property type="project" value="RGD"/>
</dbReference>
<dbReference type="GO" id="GO:0003351">
    <property type="term" value="P:epithelial cilium movement involved in extracellular fluid movement"/>
    <property type="evidence" value="ECO:0000266"/>
    <property type="project" value="RGD"/>
</dbReference>
<dbReference type="GO" id="GO:0051649">
    <property type="term" value="P:establishment of localization in cell"/>
    <property type="evidence" value="ECO:0000266"/>
    <property type="project" value="RGD"/>
</dbReference>
<dbReference type="GO" id="GO:0007507">
    <property type="term" value="P:heart development"/>
    <property type="evidence" value="ECO:0000266"/>
    <property type="project" value="RGD"/>
</dbReference>
<dbReference type="GO" id="GO:0042073">
    <property type="term" value="P:intraciliary transport"/>
    <property type="evidence" value="ECO:0000250"/>
    <property type="project" value="UniProtKB"/>
</dbReference>
<dbReference type="GO" id="GO:0036158">
    <property type="term" value="P:outer dynein arm assembly"/>
    <property type="evidence" value="ECO:0000250"/>
    <property type="project" value="UniProtKB"/>
</dbReference>
<dbReference type="GO" id="GO:0000209">
    <property type="term" value="P:protein polyubiquitination"/>
    <property type="evidence" value="ECO:0000318"/>
    <property type="project" value="GO_Central"/>
</dbReference>
<dbReference type="CDD" id="cd00200">
    <property type="entry name" value="WD40"/>
    <property type="match status" value="1"/>
</dbReference>
<dbReference type="FunFam" id="2.130.10.10:FF:000227">
    <property type="entry name" value="Dynein assembly factor with WDR repeat domains 1"/>
    <property type="match status" value="1"/>
</dbReference>
<dbReference type="FunFam" id="2.130.10.10:FF:000250">
    <property type="entry name" value="Dynein assembly factor with WDR repeat domains 1"/>
    <property type="match status" value="1"/>
</dbReference>
<dbReference type="FunFam" id="2.130.10.10:FF:000720">
    <property type="entry name" value="Dynein assembly factor with WDR repeat domains 1"/>
    <property type="match status" value="1"/>
</dbReference>
<dbReference type="FunFam" id="2.130.10.10:FF:001051">
    <property type="entry name" value="dynein assembly factor with WDR repeat domains 1"/>
    <property type="match status" value="1"/>
</dbReference>
<dbReference type="Gene3D" id="2.130.10.10">
    <property type="entry name" value="YVTN repeat-like/Quinoprotein amine dehydrogenase"/>
    <property type="match status" value="4"/>
</dbReference>
<dbReference type="InterPro" id="IPR020472">
    <property type="entry name" value="G-protein_beta_WD-40_rep"/>
</dbReference>
<dbReference type="InterPro" id="IPR015943">
    <property type="entry name" value="WD40/YVTN_repeat-like_dom_sf"/>
</dbReference>
<dbReference type="InterPro" id="IPR019775">
    <property type="entry name" value="WD40_repeat_CS"/>
</dbReference>
<dbReference type="InterPro" id="IPR036322">
    <property type="entry name" value="WD40_repeat_dom_sf"/>
</dbReference>
<dbReference type="InterPro" id="IPR001680">
    <property type="entry name" value="WD40_rpt"/>
</dbReference>
<dbReference type="PANTHER" id="PTHR19848:SF8">
    <property type="entry name" value="F-BOX AND WD REPEAT DOMAIN CONTAINING 7"/>
    <property type="match status" value="1"/>
</dbReference>
<dbReference type="PANTHER" id="PTHR19848">
    <property type="entry name" value="WD40 REPEAT PROTEIN"/>
    <property type="match status" value="1"/>
</dbReference>
<dbReference type="Pfam" id="PF00400">
    <property type="entry name" value="WD40"/>
    <property type="match status" value="8"/>
</dbReference>
<dbReference type="PRINTS" id="PR00320">
    <property type="entry name" value="GPROTEINBRPT"/>
</dbReference>
<dbReference type="SMART" id="SM00320">
    <property type="entry name" value="WD40"/>
    <property type="match status" value="8"/>
</dbReference>
<dbReference type="SUPFAM" id="SSF50978">
    <property type="entry name" value="WD40 repeat-like"/>
    <property type="match status" value="1"/>
</dbReference>
<dbReference type="PROSITE" id="PS00678">
    <property type="entry name" value="WD_REPEATS_1"/>
    <property type="match status" value="4"/>
</dbReference>
<dbReference type="PROSITE" id="PS50082">
    <property type="entry name" value="WD_REPEATS_2"/>
    <property type="match status" value="8"/>
</dbReference>
<dbReference type="PROSITE" id="PS50294">
    <property type="entry name" value="WD_REPEATS_REGION"/>
    <property type="match status" value="1"/>
</dbReference>
<name>DAW1_RAT</name>